<comment type="function">
    <text evidence="2">The phosphoenolpyruvate-dependent sugar phosphotransferase system (sugar PTS), a major carbohydrate active transport system, catalyzes the phosphorylation of incoming sugar substrates concomitantly with their translocation across the cell membrane. The enzyme II CmtAB PTS system is involved in D-mannitol transport.</text>
</comment>
<comment type="subcellular location">
    <subcellularLocation>
        <location evidence="5">Cytoplasm</location>
    </subcellularLocation>
</comment>
<comment type="domain">
    <text evidence="3">The PTS EIIA type-2 domain is phosphorylated by phospho-HPr on a histidyl residue. Then, it transfers the phosphoryl group to the PTS EIIB type-2 domain.</text>
</comment>
<name>PTMA_GEOSE</name>
<protein>
    <recommendedName>
        <fullName evidence="2">Mannitol-specific phosphotransferase enzyme IIA component</fullName>
    </recommendedName>
    <alternativeName>
        <fullName evidence="2">EIIA</fullName>
    </alternativeName>
    <alternativeName>
        <fullName evidence="4">EIII</fullName>
    </alternativeName>
    <alternativeName>
        <fullName evidence="2">PTS system mannitol-specific EIIA component</fullName>
    </alternativeName>
</protein>
<feature type="chain" id="PRO_0000186633" description="Mannitol-specific phosphotransferase enzyme IIA component">
    <location>
        <begin position="1"/>
        <end position="145"/>
    </location>
</feature>
<feature type="domain" description="PTS EIIA type-2" evidence="3">
    <location>
        <begin position="4"/>
        <end position="144"/>
    </location>
</feature>
<feature type="active site" description="Tele-phosphohistidine intermediate" evidence="2 3">
    <location>
        <position position="64"/>
    </location>
</feature>
<feature type="modified residue" description="Phosphohistidine; by HPr" evidence="1 2">
    <location>
        <position position="64"/>
    </location>
</feature>
<dbReference type="EMBL" id="U18943">
    <property type="protein sequence ID" value="AAC44465.1"/>
    <property type="molecule type" value="Genomic_DNA"/>
</dbReference>
<dbReference type="SMR" id="Q45420"/>
<dbReference type="GO" id="GO:0005737">
    <property type="term" value="C:cytoplasm"/>
    <property type="evidence" value="ECO:0007669"/>
    <property type="project" value="UniProtKB-SubCell"/>
</dbReference>
<dbReference type="GO" id="GO:0005886">
    <property type="term" value="C:plasma membrane"/>
    <property type="evidence" value="ECO:0007669"/>
    <property type="project" value="TreeGrafter"/>
</dbReference>
<dbReference type="GO" id="GO:0016301">
    <property type="term" value="F:kinase activity"/>
    <property type="evidence" value="ECO:0007669"/>
    <property type="project" value="UniProtKB-KW"/>
</dbReference>
<dbReference type="GO" id="GO:0090563">
    <property type="term" value="F:protein-phosphocysteine-sugar phosphotransferase activity"/>
    <property type="evidence" value="ECO:0007669"/>
    <property type="project" value="TreeGrafter"/>
</dbReference>
<dbReference type="GO" id="GO:0009401">
    <property type="term" value="P:phosphoenolpyruvate-dependent sugar phosphotransferase system"/>
    <property type="evidence" value="ECO:0007669"/>
    <property type="project" value="UniProtKB-KW"/>
</dbReference>
<dbReference type="CDD" id="cd00211">
    <property type="entry name" value="PTS_IIA_fru"/>
    <property type="match status" value="1"/>
</dbReference>
<dbReference type="Gene3D" id="3.40.930.10">
    <property type="entry name" value="Mannitol-specific EII, Chain A"/>
    <property type="match status" value="1"/>
</dbReference>
<dbReference type="InterPro" id="IPR016152">
    <property type="entry name" value="PTrfase/Anion_transptr"/>
</dbReference>
<dbReference type="InterPro" id="IPR002178">
    <property type="entry name" value="PTS_EIIA_type-2_dom"/>
</dbReference>
<dbReference type="InterPro" id="IPR050893">
    <property type="entry name" value="Sugar_PTS"/>
</dbReference>
<dbReference type="PANTHER" id="PTHR30181">
    <property type="entry name" value="MANNITOL PERMEASE IIC COMPONENT"/>
    <property type="match status" value="1"/>
</dbReference>
<dbReference type="PANTHER" id="PTHR30181:SF2">
    <property type="entry name" value="PTS SYSTEM MANNITOL-SPECIFIC EIICBA COMPONENT"/>
    <property type="match status" value="1"/>
</dbReference>
<dbReference type="Pfam" id="PF00359">
    <property type="entry name" value="PTS_EIIA_2"/>
    <property type="match status" value="1"/>
</dbReference>
<dbReference type="SUPFAM" id="SSF55804">
    <property type="entry name" value="Phoshotransferase/anion transport protein"/>
    <property type="match status" value="1"/>
</dbReference>
<dbReference type="PROSITE" id="PS51094">
    <property type="entry name" value="PTS_EIIA_TYPE_2"/>
    <property type="match status" value="1"/>
</dbReference>
<dbReference type="PROSITE" id="PS00372">
    <property type="entry name" value="PTS_EIIA_TYPE_2_HIS"/>
    <property type="match status" value="1"/>
</dbReference>
<accession>Q45420</accession>
<reference key="1">
    <citation type="journal article" date="1996" name="J. Bacteriol.">
        <title>Cloning, expression, and isolation of the mannitol transport protein from the thermophilic bacterium Bacillus stearothermophilus.</title>
        <authorList>
            <person name="Henstra S.A."/>
            <person name="Tolner B."/>
            <person name="ten Hoeve Duurkens R.H."/>
            <person name="Konings W.N."/>
            <person name="Robillard G.T."/>
        </authorList>
    </citation>
    <scope>NUCLEOTIDE SEQUENCE [GENOMIC DNA]</scope>
    <source>
        <strain>ATCC 29609 / DSM 2027 / NCA 1503 / NCIMB 8924</strain>
    </source>
</reference>
<sequence>MSMPILKKENIVLHARVENKTEAIRLAGQILVNNGYVEDSYIDKMFEREALTSTYMGNFIAIPHGTEDAKQFVKHSGISIIQIPDGVDFGDGNIVKLLIGIAGKNNEHLEILSKIAIVCSEVENVETMIKAATEEEILSILNEVN</sequence>
<gene>
    <name evidence="4" type="primary">mtlF</name>
</gene>
<keyword id="KW-0963">Cytoplasm</keyword>
<keyword id="KW-0418">Kinase</keyword>
<keyword id="KW-0597">Phosphoprotein</keyword>
<keyword id="KW-0598">Phosphotransferase system</keyword>
<keyword id="KW-0762">Sugar transport</keyword>
<keyword id="KW-0808">Transferase</keyword>
<keyword id="KW-0813">Transport</keyword>
<evidence type="ECO:0000250" key="1">
    <source>
        <dbReference type="UniProtKB" id="P00550"/>
    </source>
</evidence>
<evidence type="ECO:0000250" key="2">
    <source>
        <dbReference type="UniProtKB" id="P0A0E0"/>
    </source>
</evidence>
<evidence type="ECO:0000255" key="3">
    <source>
        <dbReference type="PROSITE-ProRule" id="PRU00417"/>
    </source>
</evidence>
<evidence type="ECO:0000303" key="4">
    <source>
    </source>
</evidence>
<evidence type="ECO:0000305" key="5"/>
<organism>
    <name type="scientific">Geobacillus stearothermophilus</name>
    <name type="common">Bacillus stearothermophilus</name>
    <dbReference type="NCBI Taxonomy" id="1422"/>
    <lineage>
        <taxon>Bacteria</taxon>
        <taxon>Bacillati</taxon>
        <taxon>Bacillota</taxon>
        <taxon>Bacilli</taxon>
        <taxon>Bacillales</taxon>
        <taxon>Anoxybacillaceae</taxon>
        <taxon>Geobacillus</taxon>
    </lineage>
</organism>
<proteinExistence type="inferred from homology"/>